<comment type="function">
    <text evidence="1">Condensation of UDP-2,3-diacylglucosamine and 2,3-diacylglucosamine-1-phosphate to form lipid A disaccharide, a precursor of lipid A, a phosphorylated glycolipid that anchors the lipopolysaccharide to the outer membrane of the cell.</text>
</comment>
<comment type="catalytic activity">
    <reaction evidence="1">
        <text>a lipid X + a UDP-2-N,3-O-bis[(3R)-3-hydroxyacyl]-alpha-D-glucosamine = a lipid A disaccharide + UDP + H(+)</text>
        <dbReference type="Rhea" id="RHEA:67828"/>
        <dbReference type="ChEBI" id="CHEBI:15378"/>
        <dbReference type="ChEBI" id="CHEBI:58223"/>
        <dbReference type="ChEBI" id="CHEBI:137748"/>
        <dbReference type="ChEBI" id="CHEBI:176338"/>
        <dbReference type="ChEBI" id="CHEBI:176343"/>
        <dbReference type="EC" id="2.4.1.182"/>
    </reaction>
</comment>
<comment type="pathway">
    <text evidence="1">Bacterial outer membrane biogenesis; LPS lipid A biosynthesis.</text>
</comment>
<comment type="similarity">
    <text evidence="1">Belongs to the LpxB family.</text>
</comment>
<gene>
    <name evidence="1" type="primary">lpxB1</name>
    <name type="ordered locus">lpg1371</name>
</gene>
<keyword id="KW-0328">Glycosyltransferase</keyword>
<keyword id="KW-0441">Lipid A biosynthesis</keyword>
<keyword id="KW-0444">Lipid biosynthesis</keyword>
<keyword id="KW-0443">Lipid metabolism</keyword>
<keyword id="KW-1185">Reference proteome</keyword>
<keyword id="KW-0808">Transferase</keyword>
<sequence>MPNASRVVIVAGEESGDHHAAELVKQLKAVYPDLEISGIGGKHLRAAGVHLISDLTRYAVTGLTEIIPFLKIFRKAFQDIKQHLSTQKPDLLILVDYPAFNLRLAKYAKKKLGIKIIYYISPQIWAWKGKRIHLIKDCIDKMAVIFPFEKTIYENAGVPVSFVGHPLVKKIAAAKDKHSGRTSLGLPLNEPIIALLPGSRHSEIERHIPILVNTAKLLTLDNPKLRFVVPIAGTINPDKVKAYFSNQNLTVTFIQGQAIECMSAADFVIVASGTASLECALLEKPMCIIYKSSFLTYVAAMYFIKVKFLGLCNLLANKMMVPEFLQYDCNAIELSRYISNFHNDPNQAKSMINQLAKLKESLSSSQADCSLFDLVVAELPEKNA</sequence>
<name>LPXB1_LEGPH</name>
<dbReference type="EC" id="2.4.1.182" evidence="1"/>
<dbReference type="EMBL" id="AE017354">
    <property type="protein sequence ID" value="AAU27453.1"/>
    <property type="molecule type" value="Genomic_DNA"/>
</dbReference>
<dbReference type="RefSeq" id="YP_095400.1">
    <property type="nucleotide sequence ID" value="NC_002942.5"/>
</dbReference>
<dbReference type="SMR" id="Q5ZVR9"/>
<dbReference type="STRING" id="272624.lpg1371"/>
<dbReference type="CAZy" id="GT19">
    <property type="family name" value="Glycosyltransferase Family 19"/>
</dbReference>
<dbReference type="PaxDb" id="272624-lpg1371"/>
<dbReference type="KEGG" id="lpn:lpg1371"/>
<dbReference type="PATRIC" id="fig|272624.6.peg.1441"/>
<dbReference type="eggNOG" id="COG0763">
    <property type="taxonomic scope" value="Bacteria"/>
</dbReference>
<dbReference type="HOGENOM" id="CLU_036577_3_1_6"/>
<dbReference type="OrthoDB" id="9801642at2"/>
<dbReference type="UniPathway" id="UPA00973"/>
<dbReference type="Proteomes" id="UP000000609">
    <property type="component" value="Chromosome"/>
</dbReference>
<dbReference type="GO" id="GO:0016020">
    <property type="term" value="C:membrane"/>
    <property type="evidence" value="ECO:0007669"/>
    <property type="project" value="GOC"/>
</dbReference>
<dbReference type="GO" id="GO:0008915">
    <property type="term" value="F:lipid-A-disaccharide synthase activity"/>
    <property type="evidence" value="ECO:0007669"/>
    <property type="project" value="UniProtKB-UniRule"/>
</dbReference>
<dbReference type="GO" id="GO:0005543">
    <property type="term" value="F:phospholipid binding"/>
    <property type="evidence" value="ECO:0007669"/>
    <property type="project" value="TreeGrafter"/>
</dbReference>
<dbReference type="GO" id="GO:0009245">
    <property type="term" value="P:lipid A biosynthetic process"/>
    <property type="evidence" value="ECO:0007669"/>
    <property type="project" value="UniProtKB-UniRule"/>
</dbReference>
<dbReference type="HAMAP" id="MF_00392">
    <property type="entry name" value="LpxB"/>
    <property type="match status" value="1"/>
</dbReference>
<dbReference type="InterPro" id="IPR003835">
    <property type="entry name" value="Glyco_trans_19"/>
</dbReference>
<dbReference type="NCBIfam" id="TIGR00215">
    <property type="entry name" value="lpxB"/>
    <property type="match status" value="1"/>
</dbReference>
<dbReference type="PANTHER" id="PTHR30372">
    <property type="entry name" value="LIPID-A-DISACCHARIDE SYNTHASE"/>
    <property type="match status" value="1"/>
</dbReference>
<dbReference type="PANTHER" id="PTHR30372:SF4">
    <property type="entry name" value="LIPID-A-DISACCHARIDE SYNTHASE, MITOCHONDRIAL-RELATED"/>
    <property type="match status" value="1"/>
</dbReference>
<dbReference type="Pfam" id="PF02684">
    <property type="entry name" value="LpxB"/>
    <property type="match status" value="1"/>
</dbReference>
<dbReference type="SUPFAM" id="SSF53756">
    <property type="entry name" value="UDP-Glycosyltransferase/glycogen phosphorylase"/>
    <property type="match status" value="1"/>
</dbReference>
<accession>Q5ZVR9</accession>
<reference key="1">
    <citation type="journal article" date="2004" name="Science">
        <title>The genomic sequence of the accidental pathogen Legionella pneumophila.</title>
        <authorList>
            <person name="Chien M."/>
            <person name="Morozova I."/>
            <person name="Shi S."/>
            <person name="Sheng H."/>
            <person name="Chen J."/>
            <person name="Gomez S.M."/>
            <person name="Asamani G."/>
            <person name="Hill K."/>
            <person name="Nuara J."/>
            <person name="Feder M."/>
            <person name="Rineer J."/>
            <person name="Greenberg J.J."/>
            <person name="Steshenko V."/>
            <person name="Park S.H."/>
            <person name="Zhao B."/>
            <person name="Teplitskaya E."/>
            <person name="Edwards J.R."/>
            <person name="Pampou S."/>
            <person name="Georghiou A."/>
            <person name="Chou I.-C."/>
            <person name="Iannuccilli W."/>
            <person name="Ulz M.E."/>
            <person name="Kim D.H."/>
            <person name="Geringer-Sameth A."/>
            <person name="Goldsberry C."/>
            <person name="Morozov P."/>
            <person name="Fischer S.G."/>
            <person name="Segal G."/>
            <person name="Qu X."/>
            <person name="Rzhetsky A."/>
            <person name="Zhang P."/>
            <person name="Cayanis E."/>
            <person name="De Jong P.J."/>
            <person name="Ju J."/>
            <person name="Kalachikov S."/>
            <person name="Shuman H.A."/>
            <person name="Russo J.J."/>
        </authorList>
    </citation>
    <scope>NUCLEOTIDE SEQUENCE [LARGE SCALE GENOMIC DNA]</scope>
    <source>
        <strain>Philadelphia 1 / ATCC 33152 / DSM 7513</strain>
    </source>
</reference>
<feature type="chain" id="PRO_0000255194" description="Lipid-A-disaccharide synthase 1">
    <location>
        <begin position="1"/>
        <end position="384"/>
    </location>
</feature>
<evidence type="ECO:0000255" key="1">
    <source>
        <dbReference type="HAMAP-Rule" id="MF_00392"/>
    </source>
</evidence>
<organism>
    <name type="scientific">Legionella pneumophila subsp. pneumophila (strain Philadelphia 1 / ATCC 33152 / DSM 7513)</name>
    <dbReference type="NCBI Taxonomy" id="272624"/>
    <lineage>
        <taxon>Bacteria</taxon>
        <taxon>Pseudomonadati</taxon>
        <taxon>Pseudomonadota</taxon>
        <taxon>Gammaproteobacteria</taxon>
        <taxon>Legionellales</taxon>
        <taxon>Legionellaceae</taxon>
        <taxon>Legionella</taxon>
    </lineage>
</organism>
<proteinExistence type="inferred from homology"/>
<protein>
    <recommendedName>
        <fullName evidence="1">Lipid-A-disaccharide synthase 1</fullName>
        <ecNumber evidence="1">2.4.1.182</ecNumber>
    </recommendedName>
</protein>